<dbReference type="EMBL" id="AM260522">
    <property type="protein sequence ID" value="CAJ99632.1"/>
    <property type="molecule type" value="Genomic_DNA"/>
</dbReference>
<dbReference type="RefSeq" id="WP_011577745.1">
    <property type="nucleotide sequence ID" value="NC_008229.1"/>
</dbReference>
<dbReference type="STRING" id="382638.Hac_0849"/>
<dbReference type="GeneID" id="31758263"/>
<dbReference type="KEGG" id="hac:Hac_0849"/>
<dbReference type="eggNOG" id="ENOG5030YCA">
    <property type="taxonomic scope" value="Bacteria"/>
</dbReference>
<dbReference type="HOGENOM" id="CLU_120359_0_0_7"/>
<dbReference type="OrthoDB" id="5324700at2"/>
<dbReference type="BioCyc" id="HACI382638:HAC_RS03660-MONOMER"/>
<dbReference type="Proteomes" id="UP000000775">
    <property type="component" value="Chromosome"/>
</dbReference>
<dbReference type="HAMAP" id="MF_02110">
    <property type="entry name" value="UPF0763"/>
    <property type="match status" value="1"/>
</dbReference>
<dbReference type="InterPro" id="IPR019724">
    <property type="entry name" value="UPF0763"/>
</dbReference>
<dbReference type="Pfam" id="PF10788">
    <property type="entry name" value="DUF2603"/>
    <property type="match status" value="1"/>
</dbReference>
<accession>Q17XJ4</accession>
<gene>
    <name type="ordered locus">Hac_0849</name>
</gene>
<evidence type="ECO:0000255" key="1">
    <source>
        <dbReference type="HAMAP-Rule" id="MF_02110"/>
    </source>
</evidence>
<proteinExistence type="inferred from homology"/>
<comment type="similarity">
    <text evidence="1">Belongs to the UPF0763 family.</text>
</comment>
<feature type="chain" id="PRO_0000394784" description="UPF0763 protein Hac_0849">
    <location>
        <begin position="1"/>
        <end position="171"/>
    </location>
</feature>
<reference key="1">
    <citation type="journal article" date="2006" name="PLoS Genet.">
        <title>Who ate whom? Adaptive Helicobacter genomic changes that accompanied a host jump from early humans to large felines.</title>
        <authorList>
            <person name="Eppinger M."/>
            <person name="Baar C."/>
            <person name="Linz B."/>
            <person name="Raddatz G."/>
            <person name="Lanz C."/>
            <person name="Keller H."/>
            <person name="Morelli G."/>
            <person name="Gressmann H."/>
            <person name="Achtman M."/>
            <person name="Schuster S.C."/>
        </authorList>
    </citation>
    <scope>NUCLEOTIDE SEQUENCE [LARGE SCALE GENOMIC DNA]</scope>
    <source>
        <strain>Sheeba</strain>
    </source>
</reference>
<organism>
    <name type="scientific">Helicobacter acinonychis (strain Sheeba)</name>
    <dbReference type="NCBI Taxonomy" id="382638"/>
    <lineage>
        <taxon>Bacteria</taxon>
        <taxon>Pseudomonadati</taxon>
        <taxon>Campylobacterota</taxon>
        <taxon>Epsilonproteobacteria</taxon>
        <taxon>Campylobacterales</taxon>
        <taxon>Helicobacteraceae</taxon>
        <taxon>Helicobacter</taxon>
    </lineage>
</organism>
<protein>
    <recommendedName>
        <fullName evidence="1">UPF0763 protein Hac_0849</fullName>
    </recommendedName>
</protein>
<sequence length="171" mass="20081">MEKLPRKRVSKTKSQKLINSLTTQKNRALLKKISSNEMLLELEKGAFKKNEAYFISDEEDKNYVLVPDNVISLLAENARKAFEARLKAELERDIIIQAPIDFEDVREVSLQLLENLRQKDGNLPNINTLNFVKQIKKEHPNLFFNFDNMFKQPPFNENNFENFDSNDEENF</sequence>
<name>Y849_HELAH</name>